<proteinExistence type="evidence at protein level"/>
<sequence length="364" mass="39605">MAHRFPALTPEQKKELSDIAQRIVANGKGILAADESVGTMGNRLQRIKVENTEENRRQFREILFTVDNSINQSIGGVILFHETLYQKDSQGKLFRNILKEKGIVVGIKLDQGGAPLAGTNKETTIQGLDGLSERCAQYKKDGVDFGKWRAVLRIADQCPSSLAIQENANTLARYASICQQNGLVPIVEPEVIPDGDHDLEHCQYVTEKVLAAVYKALNDHHVYLEGTLLKPNMVTAGHACTKKYTPEQVAMATVTALHRTVPAAVPGICFLSGGMSEEDATLNLNAINLCPLPKPWKLSFSYGRALQASALAAWGGKAENKKATQEAFMKRAVVNCQAAKGQYVHTGSSGAASTQSLFTASYTY</sequence>
<protein>
    <recommendedName>
        <fullName>Fructose-bisphosphate aldolase B</fullName>
        <ecNumber evidence="3">4.1.2.13</ecNumber>
    </recommendedName>
    <alternativeName>
        <fullName>Liver-type aldolase</fullName>
    </alternativeName>
</protein>
<dbReference type="EC" id="4.1.2.13" evidence="3"/>
<dbReference type="EMBL" id="U85645">
    <property type="protein sequence ID" value="AAB42087.1"/>
    <property type="molecule type" value="Genomic_DNA"/>
</dbReference>
<dbReference type="PIR" id="A28856">
    <property type="entry name" value="A28856"/>
</dbReference>
<dbReference type="RefSeq" id="NP_001164585.1">
    <property type="nucleotide sequence ID" value="NM_001171114.1"/>
</dbReference>
<dbReference type="RefSeq" id="XP_069933625.1">
    <property type="nucleotide sequence ID" value="XM_070077524.1"/>
</dbReference>
<dbReference type="RefSeq" id="XP_069933681.1">
    <property type="nucleotide sequence ID" value="XM_070077580.1"/>
</dbReference>
<dbReference type="PDB" id="1FDJ">
    <property type="method" value="X-ray"/>
    <property type="resolution" value="2.10 A"/>
    <property type="chains" value="A/B/C/D=2-364"/>
</dbReference>
<dbReference type="PDBsum" id="1FDJ"/>
<dbReference type="SMR" id="P79226"/>
<dbReference type="FunCoup" id="P79226">
    <property type="interactions" value="129"/>
</dbReference>
<dbReference type="STRING" id="9986.ENSOCUP00000002717"/>
<dbReference type="iPTMnet" id="P79226"/>
<dbReference type="PaxDb" id="9986-ENSOCUP00000012843"/>
<dbReference type="Ensembl" id="ENSOCUT00000014943.3">
    <property type="protein sequence ID" value="ENSOCUP00000012843.2"/>
    <property type="gene ID" value="ENSOCUG00000014944.3"/>
</dbReference>
<dbReference type="GeneID" id="100328925"/>
<dbReference type="KEGG" id="ocu:100328925"/>
<dbReference type="CTD" id="229"/>
<dbReference type="eggNOG" id="KOG1557">
    <property type="taxonomic scope" value="Eukaryota"/>
</dbReference>
<dbReference type="GeneTree" id="ENSGT00950000182987"/>
<dbReference type="HOGENOM" id="CLU_031243_0_0_1"/>
<dbReference type="InParanoid" id="P79226"/>
<dbReference type="OMA" id="CKGQYVT"/>
<dbReference type="OrthoDB" id="36455at2759"/>
<dbReference type="TreeFam" id="TF314203"/>
<dbReference type="SABIO-RK" id="P79226"/>
<dbReference type="UniPathway" id="UPA00109">
    <property type="reaction ID" value="UER00183"/>
</dbReference>
<dbReference type="UniPathway" id="UPA00138"/>
<dbReference type="UniPathway" id="UPA00202"/>
<dbReference type="EvolutionaryTrace" id="P79226"/>
<dbReference type="Proteomes" id="UP000001811">
    <property type="component" value="Chromosome 1"/>
</dbReference>
<dbReference type="Bgee" id="ENSOCUG00000014944">
    <property type="expression patterns" value="Expressed in adult mammalian kidney and 16 other cell types or tissues"/>
</dbReference>
<dbReference type="ExpressionAtlas" id="P79226">
    <property type="expression patterns" value="baseline"/>
</dbReference>
<dbReference type="GO" id="GO:0034451">
    <property type="term" value="C:centriolar satellite"/>
    <property type="evidence" value="ECO:0007669"/>
    <property type="project" value="UniProtKB-SubCell"/>
</dbReference>
<dbReference type="GO" id="GO:0005829">
    <property type="term" value="C:cytosol"/>
    <property type="evidence" value="ECO:0007669"/>
    <property type="project" value="UniProtKB-SubCell"/>
</dbReference>
<dbReference type="GO" id="GO:0061609">
    <property type="term" value="F:fructose-1-phosphate aldolase activity"/>
    <property type="evidence" value="ECO:0000250"/>
    <property type="project" value="UniProtKB"/>
</dbReference>
<dbReference type="GO" id="GO:0004332">
    <property type="term" value="F:fructose-bisphosphate aldolase activity"/>
    <property type="evidence" value="ECO:0000250"/>
    <property type="project" value="UniProtKB"/>
</dbReference>
<dbReference type="GO" id="GO:0006000">
    <property type="term" value="P:fructose metabolic process"/>
    <property type="evidence" value="ECO:0007669"/>
    <property type="project" value="UniProtKB-UniPathway"/>
</dbReference>
<dbReference type="GO" id="GO:0006094">
    <property type="term" value="P:gluconeogenesis"/>
    <property type="evidence" value="ECO:0007669"/>
    <property type="project" value="UniProtKB-UniPathway"/>
</dbReference>
<dbReference type="GO" id="GO:0006096">
    <property type="term" value="P:glycolytic process"/>
    <property type="evidence" value="ECO:0000250"/>
    <property type="project" value="UniProtKB"/>
</dbReference>
<dbReference type="CDD" id="cd00948">
    <property type="entry name" value="FBP_aldolase_I_a"/>
    <property type="match status" value="1"/>
</dbReference>
<dbReference type="FunFam" id="3.20.20.70:FF:000021">
    <property type="entry name" value="Fructose-bisphosphate aldolase"/>
    <property type="match status" value="1"/>
</dbReference>
<dbReference type="Gene3D" id="3.20.20.70">
    <property type="entry name" value="Aldolase class I"/>
    <property type="match status" value="1"/>
</dbReference>
<dbReference type="InterPro" id="IPR029768">
    <property type="entry name" value="Aldolase_I_AS"/>
</dbReference>
<dbReference type="InterPro" id="IPR013785">
    <property type="entry name" value="Aldolase_TIM"/>
</dbReference>
<dbReference type="InterPro" id="IPR000741">
    <property type="entry name" value="FBA_I"/>
</dbReference>
<dbReference type="NCBIfam" id="NF033379">
    <property type="entry name" value="FrucBisAld_I"/>
    <property type="match status" value="1"/>
</dbReference>
<dbReference type="PANTHER" id="PTHR11627">
    <property type="entry name" value="FRUCTOSE-BISPHOSPHATE ALDOLASE"/>
    <property type="match status" value="1"/>
</dbReference>
<dbReference type="Pfam" id="PF00274">
    <property type="entry name" value="Glycolytic"/>
    <property type="match status" value="1"/>
</dbReference>
<dbReference type="SUPFAM" id="SSF51569">
    <property type="entry name" value="Aldolase"/>
    <property type="match status" value="1"/>
</dbReference>
<dbReference type="PROSITE" id="PS00158">
    <property type="entry name" value="ALDOLASE_CLASS_I"/>
    <property type="match status" value="1"/>
</dbReference>
<gene>
    <name type="primary">ALDOB</name>
    <name type="synonym">ALDB</name>
</gene>
<feature type="initiator methionine" description="Removed" evidence="4">
    <location>
        <position position="1"/>
    </location>
</feature>
<feature type="chain" id="PRO_0000216942" description="Fructose-bisphosphate aldolase B">
    <location>
        <begin position="2"/>
        <end position="364"/>
    </location>
</feature>
<feature type="active site" description="Proton acceptor" evidence="1">
    <location>
        <position position="188"/>
    </location>
</feature>
<feature type="active site" description="Schiff-base intermediate with dihydroxyacetone-P" evidence="1">
    <location>
        <position position="230"/>
    </location>
</feature>
<feature type="binding site" evidence="1">
    <location>
        <position position="43"/>
    </location>
    <ligand>
        <name>beta-D-fructose 1,6-bisphosphate</name>
        <dbReference type="ChEBI" id="CHEBI:32966"/>
    </ligand>
</feature>
<feature type="binding site" evidence="1">
    <location>
        <begin position="272"/>
        <end position="274"/>
    </location>
    <ligand>
        <name>beta-D-fructose 1,6-bisphosphate</name>
        <dbReference type="ChEBI" id="CHEBI:32966"/>
    </ligand>
</feature>
<feature type="binding site" evidence="1">
    <location>
        <position position="304"/>
    </location>
    <ligand>
        <name>beta-D-fructose 1,6-bisphosphate</name>
        <dbReference type="ChEBI" id="CHEBI:32966"/>
    </ligand>
</feature>
<feature type="site" description="Necessary for preference for fructose 1,6-bisphosphate over fructose 1-phosphate" evidence="1">
    <location>
        <position position="364"/>
    </location>
</feature>
<feature type="modified residue" description="N-acetylalanine" evidence="4">
    <location>
        <position position="2"/>
    </location>
</feature>
<feature type="modified residue" description="N6-succinyllysine" evidence="4">
    <location>
        <position position="13"/>
    </location>
</feature>
<feature type="modified residue" description="Phosphoserine" evidence="3">
    <location>
        <position position="36"/>
    </location>
</feature>
<feature type="modified residue" description="Phosphothreonine" evidence="3">
    <location>
        <position position="39"/>
    </location>
</feature>
<feature type="modified residue" description="Phosphoserine" evidence="3">
    <location>
        <position position="89"/>
    </location>
</feature>
<feature type="modified residue" description="Phosphothreonine" evidence="3">
    <location>
        <position position="119"/>
    </location>
</feature>
<feature type="modified residue" description="N6-succinyllysine" evidence="4">
    <location>
        <position position="121"/>
    </location>
</feature>
<feature type="modified residue" description="Phosphoserine" evidence="3">
    <location>
        <position position="132"/>
    </location>
</feature>
<feature type="modified residue" description="Phosphoserine" evidence="3">
    <location>
        <position position="272"/>
    </location>
</feature>
<feature type="modified residue" description="Phosphoserine" evidence="3">
    <location>
        <position position="276"/>
    </location>
</feature>
<feature type="modified residue" description="Phosphoserine" evidence="2">
    <location>
        <position position="299"/>
    </location>
</feature>
<feature type="modified residue" description="Phosphoserine" evidence="2">
    <location>
        <position position="301"/>
    </location>
</feature>
<feature type="modified residue" description="Phosphoserine" evidence="3">
    <location>
        <position position="309"/>
    </location>
</feature>
<feature type="modified residue" description="N6-succinyllysine" evidence="4">
    <location>
        <position position="317"/>
    </location>
</feature>
<feature type="helix" evidence="6">
    <location>
        <begin position="10"/>
        <end position="24"/>
    </location>
</feature>
<feature type="helix" evidence="6">
    <location>
        <begin position="25"/>
        <end position="27"/>
    </location>
</feature>
<feature type="strand" evidence="6">
    <location>
        <begin position="29"/>
        <end position="33"/>
    </location>
</feature>
<feature type="helix" evidence="6">
    <location>
        <begin position="37"/>
        <end position="46"/>
    </location>
</feature>
<feature type="helix" evidence="6">
    <location>
        <begin position="53"/>
        <end position="64"/>
    </location>
</feature>
<feature type="helix" evidence="6">
    <location>
        <begin position="68"/>
        <end position="72"/>
    </location>
</feature>
<feature type="strand" evidence="6">
    <location>
        <begin position="74"/>
        <end position="79"/>
    </location>
</feature>
<feature type="helix" evidence="6">
    <location>
        <begin position="81"/>
        <end position="84"/>
    </location>
</feature>
<feature type="helix" evidence="6">
    <location>
        <begin position="94"/>
        <end position="100"/>
    </location>
</feature>
<feature type="strand" evidence="6">
    <location>
        <begin position="104"/>
        <end position="108"/>
    </location>
</feature>
<feature type="strand" evidence="6">
    <location>
        <begin position="113"/>
        <end position="115"/>
    </location>
</feature>
<feature type="strand" evidence="6">
    <location>
        <begin position="119"/>
        <end position="121"/>
    </location>
</feature>
<feature type="strand" evidence="6">
    <location>
        <begin position="123"/>
        <end position="125"/>
    </location>
</feature>
<feature type="helix" evidence="6">
    <location>
        <begin position="131"/>
        <end position="140"/>
    </location>
</feature>
<feature type="strand" evidence="6">
    <location>
        <begin position="145"/>
        <end position="152"/>
    </location>
</feature>
<feature type="helix" evidence="6">
    <location>
        <begin position="161"/>
        <end position="180"/>
    </location>
</feature>
<feature type="strand" evidence="6">
    <location>
        <begin position="184"/>
        <end position="191"/>
    </location>
</feature>
<feature type="helix" evidence="6">
    <location>
        <begin position="199"/>
        <end position="219"/>
    </location>
</feature>
<feature type="helix" evidence="6">
    <location>
        <begin position="224"/>
        <end position="226"/>
    </location>
</feature>
<feature type="helix" evidence="6">
    <location>
        <begin position="246"/>
        <end position="258"/>
    </location>
</feature>
<feature type="strand" evidence="6">
    <location>
        <begin position="267"/>
        <end position="270"/>
    </location>
</feature>
<feature type="helix" evidence="6">
    <location>
        <begin position="277"/>
        <end position="289"/>
    </location>
</feature>
<feature type="strand" evidence="6">
    <location>
        <begin position="296"/>
        <end position="303"/>
    </location>
</feature>
<feature type="helix" evidence="6">
    <location>
        <begin position="304"/>
        <end position="314"/>
    </location>
</feature>
<feature type="helix" evidence="6">
    <location>
        <begin position="318"/>
        <end position="320"/>
    </location>
</feature>
<feature type="helix" evidence="6">
    <location>
        <begin position="321"/>
        <end position="338"/>
    </location>
</feature>
<feature type="turn" evidence="6">
    <location>
        <begin position="339"/>
        <end position="341"/>
    </location>
</feature>
<feature type="strand" evidence="6">
    <location>
        <begin position="353"/>
        <end position="357"/>
    </location>
</feature>
<evidence type="ECO:0000250" key="1">
    <source>
        <dbReference type="UniProtKB" id="P00883"/>
    </source>
</evidence>
<evidence type="ECO:0000250" key="2">
    <source>
        <dbReference type="UniProtKB" id="P00884"/>
    </source>
</evidence>
<evidence type="ECO:0000250" key="3">
    <source>
        <dbReference type="UniProtKB" id="P05062"/>
    </source>
</evidence>
<evidence type="ECO:0000250" key="4">
    <source>
        <dbReference type="UniProtKB" id="Q91Y97"/>
    </source>
</evidence>
<evidence type="ECO:0000305" key="5"/>
<evidence type="ECO:0007829" key="6">
    <source>
        <dbReference type="PDB" id="1FDJ"/>
    </source>
</evidence>
<reference key="1">
    <citation type="journal article" date="1999" name="Comp. Biochem. Physiol.">
        <title>Identification of conserved promoter elements for aldB and isozyme specific residues in aldolase B.</title>
        <authorList>
            <person name="Berardini T.Z."/>
            <person name="Amsden A.B."/>
            <person name="Penhoet E.E."/>
            <person name="Tolan D.R."/>
        </authorList>
    </citation>
    <scope>NUCLEOTIDE SEQUENCE [GENOMIC DNA]</scope>
</reference>
<reference key="2">
    <citation type="journal article" date="1998" name="Acta Crystallogr. D">
        <title>Enhanced electron-density envelopes by extended solvent definition.</title>
        <authorList>
            <person name="Blom N."/>
            <person name="Sygush J."/>
        </authorList>
    </citation>
    <scope>X-RAY CRYSTALLOGRAPHY (1.65 ANGSTROMS)</scope>
</reference>
<accession>P79226</accession>
<organism>
    <name type="scientific">Oryctolagus cuniculus</name>
    <name type="common">Rabbit</name>
    <dbReference type="NCBI Taxonomy" id="9986"/>
    <lineage>
        <taxon>Eukaryota</taxon>
        <taxon>Metazoa</taxon>
        <taxon>Chordata</taxon>
        <taxon>Craniata</taxon>
        <taxon>Vertebrata</taxon>
        <taxon>Euteleostomi</taxon>
        <taxon>Mammalia</taxon>
        <taxon>Eutheria</taxon>
        <taxon>Euarchontoglires</taxon>
        <taxon>Glires</taxon>
        <taxon>Lagomorpha</taxon>
        <taxon>Leporidae</taxon>
        <taxon>Oryctolagus</taxon>
    </lineage>
</organism>
<name>ALDOB_RABIT</name>
<comment type="function">
    <text evidence="3">Catalyzes the aldol cleavage of fructose 1,6-biphosphate to form two triosephosphates dihydroxyacetone phosphate and D-glyceraldehyde 3-phosphate in glycolysis as well as the reverse stereospecific aldol addition reaction in gluconeogenesis. In fructolysis, metabolizes fructose 1-phosphate derived from the phosphorylation of dietary fructose by fructokinase into dihydroxyacetone phosphate and D-glyceraldehyde (By similarity). Acts as an adapter independently of its enzymatic activity, exerts a tumor suppressor role by stabilizing the ternary complex with G6PD and TP53 to inhibit G6PD activity and keep oxidative pentose phosphate metabolism in check (By similarity).</text>
</comment>
<comment type="catalytic activity">
    <reaction evidence="3">
        <text>beta-D-fructose 1,6-bisphosphate = D-glyceraldehyde 3-phosphate + dihydroxyacetone phosphate</text>
        <dbReference type="Rhea" id="RHEA:14729"/>
        <dbReference type="ChEBI" id="CHEBI:32966"/>
        <dbReference type="ChEBI" id="CHEBI:57642"/>
        <dbReference type="ChEBI" id="CHEBI:59776"/>
        <dbReference type="EC" id="4.1.2.13"/>
    </reaction>
    <physiologicalReaction direction="left-to-right" evidence="3">
        <dbReference type="Rhea" id="RHEA:14730"/>
    </physiologicalReaction>
    <physiologicalReaction direction="right-to-left" evidence="3">
        <dbReference type="Rhea" id="RHEA:14731"/>
    </physiologicalReaction>
</comment>
<comment type="catalytic activity">
    <reaction evidence="3">
        <text>beta-D-fructose 1-phosphate = D-glyceraldehyde + dihydroxyacetone phosphate</text>
        <dbReference type="Rhea" id="RHEA:30851"/>
        <dbReference type="ChEBI" id="CHEBI:17378"/>
        <dbReference type="ChEBI" id="CHEBI:57642"/>
        <dbReference type="ChEBI" id="CHEBI:138881"/>
    </reaction>
    <physiologicalReaction direction="left-to-right" evidence="3">
        <dbReference type="Rhea" id="RHEA:30852"/>
    </physiologicalReaction>
    <physiologicalReaction direction="right-to-left" evidence="3">
        <dbReference type="Rhea" id="RHEA:30853"/>
    </physiologicalReaction>
</comment>
<comment type="pathway">
    <text evidence="3">Carbohydrate degradation; glycolysis; D-glyceraldehyde 3-phosphate and glycerone phosphate from D-glucose: step 4/4.</text>
</comment>
<comment type="pathway">
    <text evidence="3">Carbohydrate biosynthesis; gluconeogenesis.</text>
</comment>
<comment type="pathway">
    <text evidence="3">Carbohydrate metabolism; fructose metabolism.</text>
</comment>
<comment type="subunit">
    <text evidence="3">Homotetramer. Interacts with BBS1, BBS2, BBS4 and BBS7. Forms a ternary complex with G6PD and TP53; this interaction is direct.</text>
</comment>
<comment type="subcellular location">
    <subcellularLocation>
        <location evidence="3">Cytoplasm</location>
        <location evidence="3">Cytosol</location>
    </subcellularLocation>
    <subcellularLocation>
        <location evidence="3">Cytoplasm</location>
        <location evidence="3">Cytoskeleton</location>
        <location evidence="3">Microtubule organizing center</location>
        <location evidence="3">Centrosome</location>
        <location evidence="3">Centriolar satellite</location>
    </subcellularLocation>
</comment>
<comment type="miscellaneous">
    <text>In vertebrates, 3 forms of this ubiquitous glycolytic enzyme are found, aldolase A in muscle, aldolase B in liver and aldolase C in brain.</text>
</comment>
<comment type="similarity">
    <text evidence="5">Belongs to the class I fructose-bisphosphate aldolase family.</text>
</comment>
<keyword id="KW-0002">3D-structure</keyword>
<keyword id="KW-0007">Acetylation</keyword>
<keyword id="KW-0963">Cytoplasm</keyword>
<keyword id="KW-0206">Cytoskeleton</keyword>
<keyword id="KW-0324">Glycolysis</keyword>
<keyword id="KW-0456">Lyase</keyword>
<keyword id="KW-0597">Phosphoprotein</keyword>
<keyword id="KW-1185">Reference proteome</keyword>
<keyword id="KW-0704">Schiff base</keyword>